<proteinExistence type="inferred from homology"/>
<keyword id="KW-0687">Ribonucleoprotein</keyword>
<keyword id="KW-0689">Ribosomal protein</keyword>
<keyword id="KW-0694">RNA-binding</keyword>
<keyword id="KW-0699">rRNA-binding</keyword>
<organism>
    <name type="scientific">Borrelia recurrentis (strain A1)</name>
    <dbReference type="NCBI Taxonomy" id="412418"/>
    <lineage>
        <taxon>Bacteria</taxon>
        <taxon>Pseudomonadati</taxon>
        <taxon>Spirochaetota</taxon>
        <taxon>Spirochaetia</taxon>
        <taxon>Spirochaetales</taxon>
        <taxon>Borreliaceae</taxon>
        <taxon>Borrelia</taxon>
    </lineage>
</organism>
<sequence>MARVKNGIVHVARRKRILKKTKGFWGTKKSNYKKAKDTLRKGMMYATRDRKTRKRDLRSLWIVRISAALTGMGINYSRFFEGLRKLNIKLNRKILSNLAIEDIESFKKIVYEIKN</sequence>
<name>RL20_BORRA</name>
<reference key="1">
    <citation type="journal article" date="2008" name="PLoS Genet.">
        <title>The genome of Borrelia recurrentis, the agent of deadly louse-borne relapsing fever, is a degraded subset of tick-borne Borrelia duttonii.</title>
        <authorList>
            <person name="Lescot M."/>
            <person name="Audic S."/>
            <person name="Robert C."/>
            <person name="Nguyen T.T."/>
            <person name="Blanc G."/>
            <person name="Cutler S.J."/>
            <person name="Wincker P."/>
            <person name="Couloux A."/>
            <person name="Claverie J.-M."/>
            <person name="Raoult D."/>
            <person name="Drancourt M."/>
        </authorList>
    </citation>
    <scope>NUCLEOTIDE SEQUENCE [LARGE SCALE GENOMIC DNA]</scope>
    <source>
        <strain>A1</strain>
    </source>
</reference>
<evidence type="ECO:0000255" key="1">
    <source>
        <dbReference type="HAMAP-Rule" id="MF_00382"/>
    </source>
</evidence>
<evidence type="ECO:0000305" key="2"/>
<feature type="chain" id="PRO_1000122280" description="Large ribosomal subunit protein bL20">
    <location>
        <begin position="1"/>
        <end position="115"/>
    </location>
</feature>
<gene>
    <name evidence="1" type="primary">rplT</name>
    <name type="ordered locus">BRE_186</name>
</gene>
<dbReference type="EMBL" id="CP000993">
    <property type="protein sequence ID" value="ACH94441.1"/>
    <property type="molecule type" value="Genomic_DNA"/>
</dbReference>
<dbReference type="RefSeq" id="WP_012537955.1">
    <property type="nucleotide sequence ID" value="NZ_CP169983.1"/>
</dbReference>
<dbReference type="SMR" id="B5RR07"/>
<dbReference type="KEGG" id="bre:BRE_186"/>
<dbReference type="HOGENOM" id="CLU_123265_0_1_12"/>
<dbReference type="Proteomes" id="UP000000612">
    <property type="component" value="Chromosome"/>
</dbReference>
<dbReference type="GO" id="GO:1990904">
    <property type="term" value="C:ribonucleoprotein complex"/>
    <property type="evidence" value="ECO:0007669"/>
    <property type="project" value="UniProtKB-KW"/>
</dbReference>
<dbReference type="GO" id="GO:0005840">
    <property type="term" value="C:ribosome"/>
    <property type="evidence" value="ECO:0007669"/>
    <property type="project" value="UniProtKB-KW"/>
</dbReference>
<dbReference type="GO" id="GO:0019843">
    <property type="term" value="F:rRNA binding"/>
    <property type="evidence" value="ECO:0007669"/>
    <property type="project" value="UniProtKB-UniRule"/>
</dbReference>
<dbReference type="GO" id="GO:0003735">
    <property type="term" value="F:structural constituent of ribosome"/>
    <property type="evidence" value="ECO:0007669"/>
    <property type="project" value="InterPro"/>
</dbReference>
<dbReference type="GO" id="GO:0000027">
    <property type="term" value="P:ribosomal large subunit assembly"/>
    <property type="evidence" value="ECO:0007669"/>
    <property type="project" value="UniProtKB-UniRule"/>
</dbReference>
<dbReference type="GO" id="GO:0006412">
    <property type="term" value="P:translation"/>
    <property type="evidence" value="ECO:0007669"/>
    <property type="project" value="InterPro"/>
</dbReference>
<dbReference type="CDD" id="cd07026">
    <property type="entry name" value="Ribosomal_L20"/>
    <property type="match status" value="1"/>
</dbReference>
<dbReference type="FunFam" id="1.10.1900.20:FF:000001">
    <property type="entry name" value="50S ribosomal protein L20"/>
    <property type="match status" value="1"/>
</dbReference>
<dbReference type="Gene3D" id="6.10.160.10">
    <property type="match status" value="1"/>
</dbReference>
<dbReference type="Gene3D" id="1.10.1900.20">
    <property type="entry name" value="Ribosomal protein L20"/>
    <property type="match status" value="1"/>
</dbReference>
<dbReference type="HAMAP" id="MF_00382">
    <property type="entry name" value="Ribosomal_bL20"/>
    <property type="match status" value="1"/>
</dbReference>
<dbReference type="InterPro" id="IPR005813">
    <property type="entry name" value="Ribosomal_bL20"/>
</dbReference>
<dbReference type="InterPro" id="IPR035566">
    <property type="entry name" value="Ribosomal_protein_bL20_C"/>
</dbReference>
<dbReference type="NCBIfam" id="TIGR01032">
    <property type="entry name" value="rplT_bact"/>
    <property type="match status" value="1"/>
</dbReference>
<dbReference type="PANTHER" id="PTHR10986">
    <property type="entry name" value="39S RIBOSOMAL PROTEIN L20"/>
    <property type="match status" value="1"/>
</dbReference>
<dbReference type="Pfam" id="PF00453">
    <property type="entry name" value="Ribosomal_L20"/>
    <property type="match status" value="1"/>
</dbReference>
<dbReference type="PRINTS" id="PR00062">
    <property type="entry name" value="RIBOSOMALL20"/>
</dbReference>
<dbReference type="SUPFAM" id="SSF74731">
    <property type="entry name" value="Ribosomal protein L20"/>
    <property type="match status" value="1"/>
</dbReference>
<accession>B5RR07</accession>
<protein>
    <recommendedName>
        <fullName evidence="1">Large ribosomal subunit protein bL20</fullName>
    </recommendedName>
    <alternativeName>
        <fullName evidence="2">50S ribosomal protein L20</fullName>
    </alternativeName>
</protein>
<comment type="function">
    <text evidence="1">Binds directly to 23S ribosomal RNA and is necessary for the in vitro assembly process of the 50S ribosomal subunit. It is not involved in the protein synthesizing functions of that subunit.</text>
</comment>
<comment type="similarity">
    <text evidence="1">Belongs to the bacterial ribosomal protein bL20 family.</text>
</comment>